<evidence type="ECO:0000255" key="1">
    <source>
        <dbReference type="PROSITE-ProRule" id="PRU00498"/>
    </source>
</evidence>
<evidence type="ECO:0000256" key="2">
    <source>
        <dbReference type="SAM" id="MobiDB-lite"/>
    </source>
</evidence>
<evidence type="ECO:0000269" key="3">
    <source>
    </source>
</evidence>
<evidence type="ECO:0000269" key="4">
    <source>
    </source>
</evidence>
<evidence type="ECO:0000269" key="5">
    <source>
    </source>
</evidence>
<evidence type="ECO:0000269" key="6">
    <source>
    </source>
</evidence>
<evidence type="ECO:0000269" key="7">
    <source>
    </source>
</evidence>
<evidence type="ECO:0000269" key="8">
    <source>
    </source>
</evidence>
<evidence type="ECO:0000269" key="9">
    <source>
    </source>
</evidence>
<evidence type="ECO:0000269" key="10">
    <source>
    </source>
</evidence>
<evidence type="ECO:0000269" key="11">
    <source>
    </source>
</evidence>
<evidence type="ECO:0000303" key="12">
    <source>
    </source>
</evidence>
<evidence type="ECO:0000303" key="13">
    <source>
    </source>
</evidence>
<evidence type="ECO:0000303" key="14">
    <source>
    </source>
</evidence>
<evidence type="ECO:0000305" key="15"/>
<evidence type="ECO:0000312" key="16">
    <source>
        <dbReference type="EMBL" id="AAY55433.1"/>
    </source>
</evidence>
<evidence type="ECO:0000312" key="17">
    <source>
        <dbReference type="EMBL" id="AHE76189.1"/>
    </source>
</evidence>
<evidence type="ECO:0000312" key="18">
    <source>
        <dbReference type="FlyBase" id="FBgn0038199"/>
    </source>
</evidence>
<evidence type="ECO:0000312" key="19">
    <source>
        <dbReference type="Proteomes" id="UP000000803"/>
    </source>
</evidence>
<organism evidence="16">
    <name type="scientific">Drosophila melanogaster</name>
    <name type="common">Fruit fly</name>
    <dbReference type="NCBI Taxonomy" id="7227"/>
    <lineage>
        <taxon>Eukaryota</taxon>
        <taxon>Metazoa</taxon>
        <taxon>Ecdysozoa</taxon>
        <taxon>Arthropoda</taxon>
        <taxon>Hexapoda</taxon>
        <taxon>Insecta</taxon>
        <taxon>Pterygota</taxon>
        <taxon>Neoptera</taxon>
        <taxon>Endopterygota</taxon>
        <taxon>Diptera</taxon>
        <taxon>Brachycera</taxon>
        <taxon>Muscomorpha</taxon>
        <taxon>Ephydroidea</taxon>
        <taxon>Drosophilidae</taxon>
        <taxon>Drosophila</taxon>
        <taxon>Sophophora</taxon>
    </lineage>
</organism>
<protein>
    <recommendedName>
        <fullName evidence="12">Neuropeptide CCHamide-1</fullName>
    </recommendedName>
</protein>
<reference evidence="15" key="1">
    <citation type="journal article" date="2012" name="Front. Endocrinol.">
        <title>Isolation of the bioactive peptides CCHamide-1 and CCHamide-2 from Drosophila and their putative role in appetite regulation as ligands for G protein-coupled receptors.</title>
        <authorList>
            <person name="Ida T."/>
            <person name="Takahashi T."/>
            <person name="Tominaga H."/>
            <person name="Sato T."/>
            <person name="Sano H."/>
            <person name="Kume K."/>
            <person name="Ozaki M."/>
            <person name="Hiraguchi T."/>
            <person name="Shiotani H."/>
            <person name="Terajima S."/>
            <person name="Nakamura Y."/>
            <person name="Mori K."/>
            <person name="Yoshida M."/>
            <person name="Kato J."/>
            <person name="Murakami N."/>
            <person name="Miyazato M."/>
            <person name="Kangawa K."/>
            <person name="Kojima M."/>
        </authorList>
    </citation>
    <scope>NUCLEOTIDE SEQUENCE [MRNA]</scope>
    <scope>PROTEIN SEQUENCE OF 23-35</scope>
    <scope>FUNCTION</scope>
    <scope>MASS SPECTROMETRY</scope>
    <scope>AMIDATION AT HIS-35</scope>
    <scope>DISULFIDE BOND</scope>
</reference>
<reference evidence="17" key="2">
    <citation type="submission" date="2013-07" db="EMBL/GenBank/DDBJ databases">
        <title>cDNA cloning of CCHamide1 and CCHamide2 from D. melanogaster.</title>
        <authorList>
            <person name="Engelsen S."/>
            <person name="Hauser F."/>
            <person name="Grimmelikhuijzen C.J.P."/>
        </authorList>
    </citation>
    <scope>NUCLEOTIDE SEQUENCE [MRNA]</scope>
</reference>
<reference evidence="19" key="3">
    <citation type="journal article" date="2000" name="Science">
        <title>The genome sequence of Drosophila melanogaster.</title>
        <authorList>
            <person name="Adams M.D."/>
            <person name="Celniker S.E."/>
            <person name="Holt R.A."/>
            <person name="Evans C.A."/>
            <person name="Gocayne J.D."/>
            <person name="Amanatides P.G."/>
            <person name="Scherer S.E."/>
            <person name="Li P.W."/>
            <person name="Hoskins R.A."/>
            <person name="Galle R.F."/>
            <person name="George R.A."/>
            <person name="Lewis S.E."/>
            <person name="Richards S."/>
            <person name="Ashburner M."/>
            <person name="Henderson S.N."/>
            <person name="Sutton G.G."/>
            <person name="Wortman J.R."/>
            <person name="Yandell M.D."/>
            <person name="Zhang Q."/>
            <person name="Chen L.X."/>
            <person name="Brandon R.C."/>
            <person name="Rogers Y.-H.C."/>
            <person name="Blazej R.G."/>
            <person name="Champe M."/>
            <person name="Pfeiffer B.D."/>
            <person name="Wan K.H."/>
            <person name="Doyle C."/>
            <person name="Baxter E.G."/>
            <person name="Helt G."/>
            <person name="Nelson C.R."/>
            <person name="Miklos G.L.G."/>
            <person name="Abril J.F."/>
            <person name="Agbayani A."/>
            <person name="An H.-J."/>
            <person name="Andrews-Pfannkoch C."/>
            <person name="Baldwin D."/>
            <person name="Ballew R.M."/>
            <person name="Basu A."/>
            <person name="Baxendale J."/>
            <person name="Bayraktaroglu L."/>
            <person name="Beasley E.M."/>
            <person name="Beeson K.Y."/>
            <person name="Benos P.V."/>
            <person name="Berman B.P."/>
            <person name="Bhandari D."/>
            <person name="Bolshakov S."/>
            <person name="Borkova D."/>
            <person name="Botchan M.R."/>
            <person name="Bouck J."/>
            <person name="Brokstein P."/>
            <person name="Brottier P."/>
            <person name="Burtis K.C."/>
            <person name="Busam D.A."/>
            <person name="Butler H."/>
            <person name="Cadieu E."/>
            <person name="Center A."/>
            <person name="Chandra I."/>
            <person name="Cherry J.M."/>
            <person name="Cawley S."/>
            <person name="Dahlke C."/>
            <person name="Davenport L.B."/>
            <person name="Davies P."/>
            <person name="de Pablos B."/>
            <person name="Delcher A."/>
            <person name="Deng Z."/>
            <person name="Mays A.D."/>
            <person name="Dew I."/>
            <person name="Dietz S.M."/>
            <person name="Dodson K."/>
            <person name="Doup L.E."/>
            <person name="Downes M."/>
            <person name="Dugan-Rocha S."/>
            <person name="Dunkov B.C."/>
            <person name="Dunn P."/>
            <person name="Durbin K.J."/>
            <person name="Evangelista C.C."/>
            <person name="Ferraz C."/>
            <person name="Ferriera S."/>
            <person name="Fleischmann W."/>
            <person name="Fosler C."/>
            <person name="Gabrielian A.E."/>
            <person name="Garg N.S."/>
            <person name="Gelbart W.M."/>
            <person name="Glasser K."/>
            <person name="Glodek A."/>
            <person name="Gong F."/>
            <person name="Gorrell J.H."/>
            <person name="Gu Z."/>
            <person name="Guan P."/>
            <person name="Harris M."/>
            <person name="Harris N.L."/>
            <person name="Harvey D.A."/>
            <person name="Heiman T.J."/>
            <person name="Hernandez J.R."/>
            <person name="Houck J."/>
            <person name="Hostin D."/>
            <person name="Houston K.A."/>
            <person name="Howland T.J."/>
            <person name="Wei M.-H."/>
            <person name="Ibegwam C."/>
            <person name="Jalali M."/>
            <person name="Kalush F."/>
            <person name="Karpen G.H."/>
            <person name="Ke Z."/>
            <person name="Kennison J.A."/>
            <person name="Ketchum K.A."/>
            <person name="Kimmel B.E."/>
            <person name="Kodira C.D."/>
            <person name="Kraft C.L."/>
            <person name="Kravitz S."/>
            <person name="Kulp D."/>
            <person name="Lai Z."/>
            <person name="Lasko P."/>
            <person name="Lei Y."/>
            <person name="Levitsky A.A."/>
            <person name="Li J.H."/>
            <person name="Li Z."/>
            <person name="Liang Y."/>
            <person name="Lin X."/>
            <person name="Liu X."/>
            <person name="Mattei B."/>
            <person name="McIntosh T.C."/>
            <person name="McLeod M.P."/>
            <person name="McPherson D."/>
            <person name="Merkulov G."/>
            <person name="Milshina N.V."/>
            <person name="Mobarry C."/>
            <person name="Morris J."/>
            <person name="Moshrefi A."/>
            <person name="Mount S.M."/>
            <person name="Moy M."/>
            <person name="Murphy B."/>
            <person name="Murphy L."/>
            <person name="Muzny D.M."/>
            <person name="Nelson D.L."/>
            <person name="Nelson D.R."/>
            <person name="Nelson K.A."/>
            <person name="Nixon K."/>
            <person name="Nusskern D.R."/>
            <person name="Pacleb J.M."/>
            <person name="Palazzolo M."/>
            <person name="Pittman G.S."/>
            <person name="Pan S."/>
            <person name="Pollard J."/>
            <person name="Puri V."/>
            <person name="Reese M.G."/>
            <person name="Reinert K."/>
            <person name="Remington K."/>
            <person name="Saunders R.D.C."/>
            <person name="Scheeler F."/>
            <person name="Shen H."/>
            <person name="Shue B.C."/>
            <person name="Siden-Kiamos I."/>
            <person name="Simpson M."/>
            <person name="Skupski M.P."/>
            <person name="Smith T.J."/>
            <person name="Spier E."/>
            <person name="Spradling A.C."/>
            <person name="Stapleton M."/>
            <person name="Strong R."/>
            <person name="Sun E."/>
            <person name="Svirskas R."/>
            <person name="Tector C."/>
            <person name="Turner R."/>
            <person name="Venter E."/>
            <person name="Wang A.H."/>
            <person name="Wang X."/>
            <person name="Wang Z.-Y."/>
            <person name="Wassarman D.A."/>
            <person name="Weinstock G.M."/>
            <person name="Weissenbach J."/>
            <person name="Williams S.M."/>
            <person name="Woodage T."/>
            <person name="Worley K.C."/>
            <person name="Wu D."/>
            <person name="Yang S."/>
            <person name="Yao Q.A."/>
            <person name="Ye J."/>
            <person name="Yeh R.-F."/>
            <person name="Zaveri J.S."/>
            <person name="Zhan M."/>
            <person name="Zhang G."/>
            <person name="Zhao Q."/>
            <person name="Zheng L."/>
            <person name="Zheng X.H."/>
            <person name="Zhong F.N."/>
            <person name="Zhong W."/>
            <person name="Zhou X."/>
            <person name="Zhu S.C."/>
            <person name="Zhu X."/>
            <person name="Smith H.O."/>
            <person name="Gibbs R.A."/>
            <person name="Myers E.W."/>
            <person name="Rubin G.M."/>
            <person name="Venter J.C."/>
        </authorList>
    </citation>
    <scope>NUCLEOTIDE SEQUENCE [LARGE SCALE GENOMIC DNA]</scope>
    <source>
        <strain evidence="19">Berkeley</strain>
    </source>
</reference>
<reference evidence="19" key="4">
    <citation type="journal article" date="2002" name="Genome Biol.">
        <title>Annotation of the Drosophila melanogaster euchromatic genome: a systematic review.</title>
        <authorList>
            <person name="Misra S."/>
            <person name="Crosby M.A."/>
            <person name="Mungall C.J."/>
            <person name="Matthews B.B."/>
            <person name="Campbell K.S."/>
            <person name="Hradecky P."/>
            <person name="Huang Y."/>
            <person name="Kaminker J.S."/>
            <person name="Millburn G.H."/>
            <person name="Prochnik S.E."/>
            <person name="Smith C.D."/>
            <person name="Tupy J.L."/>
            <person name="Whitfield E.J."/>
            <person name="Bayraktaroglu L."/>
            <person name="Berman B.P."/>
            <person name="Bettencourt B.R."/>
            <person name="Celniker S.E."/>
            <person name="de Grey A.D.N.J."/>
            <person name="Drysdale R.A."/>
            <person name="Harris N.L."/>
            <person name="Richter J."/>
            <person name="Russo S."/>
            <person name="Schroeder A.J."/>
            <person name="Shu S.Q."/>
            <person name="Stapleton M."/>
            <person name="Yamada C."/>
            <person name="Ashburner M."/>
            <person name="Gelbart W.M."/>
            <person name="Rubin G.M."/>
            <person name="Lewis S.E."/>
        </authorList>
    </citation>
    <scope>GENOME REANNOTATION</scope>
    <source>
        <strain evidence="19">Berkeley</strain>
    </source>
</reference>
<reference evidence="16" key="5">
    <citation type="submission" date="2005-05" db="EMBL/GenBank/DDBJ databases">
        <authorList>
            <person name="Stapleton M."/>
            <person name="Carlson J."/>
            <person name="Chavez C."/>
            <person name="Frise E."/>
            <person name="George R."/>
            <person name="Pacleb J."/>
            <person name="Park S."/>
            <person name="Wan K."/>
            <person name="Yu C."/>
            <person name="Celniker S."/>
        </authorList>
    </citation>
    <scope>NUCLEOTIDE SEQUENCE [LARGE SCALE MRNA]</scope>
</reference>
<reference evidence="15" key="6">
    <citation type="journal article" date="2011" name="J. Proteome Res.">
        <title>Peptidomics and peptide hormone processing in the Drosophila midgut.</title>
        <authorList>
            <person name="Reiher W."/>
            <person name="Shirras C."/>
            <person name="Kahnt J."/>
            <person name="Baumeister S."/>
            <person name="Isaac R.E."/>
            <person name="Wegener C."/>
        </authorList>
    </citation>
    <scope>PROTEIN SEQUENCE OF 23-35</scope>
    <scope>IDENTIFICATION BY MASS SPECTROMETRY</scope>
    <scope>MASS SPECTROMETRY</scope>
    <scope>AMIDATION AT HIS-35</scope>
    <scope>DISULFIDE BOND</scope>
    <source>
        <tissue evidence="13">Midgut</tissue>
    </source>
</reference>
<reference evidence="15" key="7">
    <citation type="journal article" date="2011" name="Biochem. Biophys. Res. Commun.">
        <title>The Drosophila genes CG14593 and CG30106 code for G-protein-coupled receptors specifically activated by the neuropeptides CCHamide-1 and CCHamide-2.</title>
        <authorList>
            <person name="Hansen K.K."/>
            <person name="Hauser F."/>
            <person name="Williamson M."/>
            <person name="Weber S.B."/>
            <person name="Grimmelikhuijzen C.J."/>
        </authorList>
    </citation>
    <scope>FUNCTION</scope>
</reference>
<reference evidence="15" key="8">
    <citation type="journal article" date="2013" name="PLoS ONE">
        <title>Expression patterns of the Drosophila neuropeptide CCHamide-2 and its receptor may suggest hormonal signaling from the gut to the brain.</title>
        <authorList>
            <person name="Li S."/>
            <person name="Torre-Muruzabal T."/>
            <person name="Soegaard K.C."/>
            <person name="Ren G.R."/>
            <person name="Hauser F."/>
            <person name="Engelsen S.M."/>
            <person name="Poedenphanth M.D."/>
            <person name="Desjardins A."/>
            <person name="Grimmelikhuijzen C.J."/>
        </authorList>
    </citation>
    <scope>TISSUE SPECIFICITY</scope>
    <scope>DEVELOPMENTAL STAGE</scope>
    <source>
        <strain>Canton-S</strain>
    </source>
</reference>
<reference evidence="15" key="9">
    <citation type="journal article" date="2014" name="Cell Tissue Res.">
        <title>More Drosophila enteroendocrine peptides: Orcokinin B and the CCHamides 1 and 2.</title>
        <authorList>
            <person name="Veenstra J.A."/>
            <person name="Ida T."/>
        </authorList>
    </citation>
    <scope>TISSUE SPECIFICITY</scope>
</reference>
<reference evidence="15" key="10">
    <citation type="journal article" date="2015" name="PLoS ONE">
        <title>CCHamide-2 is an orexigenic brain-gut peptide in Drosophila.</title>
        <authorList>
            <person name="Ren G.R."/>
            <person name="Hauser F."/>
            <person name="Rewitz K.F."/>
            <person name="Kondo S."/>
            <person name="Engelbrecht A.F."/>
            <person name="Didriksen A.K."/>
            <person name="Schjoett S.R."/>
            <person name="Sembach F.E."/>
            <person name="Li S."/>
            <person name="Soegaard K.C."/>
            <person name="Soendergaard L."/>
            <person name="Grimmelikhuijzen C.J."/>
        </authorList>
    </citation>
    <scope>DISRUPTION PHENOTYPE</scope>
</reference>
<reference key="11">
    <citation type="journal article" date="2018" name="Front. Physiol.">
        <title>The CCHamide1 Neuropeptide Expressed in the Anterior Dorsal Neuron 1 Conveys a Circadian Signal to the Ventral Lateral Neurons in Drosophila melanogaster.</title>
        <authorList>
            <person name="Fujiwara Y."/>
            <person name="Hermann-Luibl C."/>
            <person name="Katsura M."/>
            <person name="Sekiguchi M."/>
            <person name="Ida T."/>
            <person name="Helfrich-Foerster C."/>
            <person name="Yoshii T."/>
        </authorList>
    </citation>
    <scope>FUNCTION</scope>
    <scope>TISSUE SPECIFICITY</scope>
    <scope>INDUCTION BY CIRCADIAN CLOCK</scope>
    <scope>DISRUPTION PHENOTYPE</scope>
</reference>
<reference key="12">
    <citation type="journal article" date="2023" name="Cell">
        <title>A gut-secreted peptide suppresses arousability from sleep.</title>
        <authorList>
            <person name="Titos I."/>
            <person name="Juginovic A."/>
            <person name="Vaccaro A."/>
            <person name="Nambara K."/>
            <person name="Gorelik P."/>
            <person name="Mazor O."/>
            <person name="Rogulja D."/>
        </authorList>
    </citation>
    <scope>FUNCTION</scope>
    <scope>TISSUE SPECIFICITY</scope>
    <scope>INDUCTION BY PROTEIN RICH DIET</scope>
    <scope>DISRUPTION PHENOTYPE</scope>
</reference>
<reference key="13">
    <citation type="journal article" date="2023" name="Chronobiol. Int.">
        <title>Pigment-dispersing factor and CCHamide1 in the Drosophila circadian clock network.</title>
        <authorList>
            <person name="Kuwano R."/>
            <person name="Katsura M."/>
            <person name="Iwata M."/>
            <person name="Yokosako T."/>
            <person name="Yoshii T."/>
        </authorList>
    </citation>
    <scope>FUNCTION</scope>
    <scope>DISRUPTION PHENOTYPE</scope>
</reference>
<dbReference type="EMBL" id="AE014297">
    <property type="protein sequence ID" value="AAF55014.2"/>
    <property type="molecule type" value="Genomic_DNA"/>
</dbReference>
<dbReference type="EMBL" id="BT022941">
    <property type="protein sequence ID" value="AAY55357.1"/>
    <property type="molecule type" value="mRNA"/>
</dbReference>
<dbReference type="EMBL" id="BT023017">
    <property type="protein sequence ID" value="AAY55433.1"/>
    <property type="molecule type" value="mRNA"/>
</dbReference>
<dbReference type="EMBL" id="KF309022">
    <property type="protein sequence ID" value="AHE76189.1"/>
    <property type="molecule type" value="mRNA"/>
</dbReference>
<dbReference type="RefSeq" id="NP_001097784.1">
    <property type="nucleotide sequence ID" value="NM_001104314.2"/>
</dbReference>
<dbReference type="FunCoup" id="Q4V4I9">
    <property type="interactions" value="26"/>
</dbReference>
<dbReference type="STRING" id="7227.FBpp0112144"/>
<dbReference type="GlyGen" id="Q4V4I9">
    <property type="glycosylation" value="1 site"/>
</dbReference>
<dbReference type="PaxDb" id="7227-FBpp0112144"/>
<dbReference type="DNASU" id="41711"/>
<dbReference type="EnsemblMetazoa" id="FBtr0113232">
    <property type="protein sequence ID" value="FBpp0112144"/>
    <property type="gene ID" value="FBgn0038199"/>
</dbReference>
<dbReference type="GeneID" id="41711"/>
<dbReference type="KEGG" id="dme:Dmel_CG14358"/>
<dbReference type="UCSC" id="CG14358-RB">
    <property type="organism name" value="d. melanogaster"/>
</dbReference>
<dbReference type="AGR" id="FB:FBgn0038199"/>
<dbReference type="CTD" id="41711"/>
<dbReference type="FlyBase" id="FBgn0038199">
    <property type="gene designation" value="CCHa1"/>
</dbReference>
<dbReference type="VEuPathDB" id="VectorBase:FBgn0038199"/>
<dbReference type="eggNOG" id="ENOG502TD7N">
    <property type="taxonomic scope" value="Eukaryota"/>
</dbReference>
<dbReference type="HOGENOM" id="CLU_1534182_0_0_1"/>
<dbReference type="InParanoid" id="Q4V4I9"/>
<dbReference type="OMA" id="MWYSKCS"/>
<dbReference type="OrthoDB" id="6367990at2759"/>
<dbReference type="PhylomeDB" id="Q4V4I9"/>
<dbReference type="BioGRID-ORCS" id="41711">
    <property type="hits" value="0 hits in 1 CRISPR screen"/>
</dbReference>
<dbReference type="GenomeRNAi" id="41711"/>
<dbReference type="PRO" id="PR:Q4V4I9"/>
<dbReference type="Proteomes" id="UP000000803">
    <property type="component" value="Chromosome 3R"/>
</dbReference>
<dbReference type="Bgee" id="FBgn0038199">
    <property type="expression patterns" value="Expressed in adult posterior midgut class I enteroendocrine cell in adult midgut (Drosophila) and 41 other cell types or tissues"/>
</dbReference>
<dbReference type="ExpressionAtlas" id="Q4V4I9">
    <property type="expression patterns" value="baseline and differential"/>
</dbReference>
<dbReference type="GO" id="GO:0005615">
    <property type="term" value="C:extracellular space"/>
    <property type="evidence" value="ECO:0000314"/>
    <property type="project" value="FlyBase"/>
</dbReference>
<dbReference type="GO" id="GO:0005184">
    <property type="term" value="F:neuropeptide hormone activity"/>
    <property type="evidence" value="ECO:0000314"/>
    <property type="project" value="FlyBase"/>
</dbReference>
<dbReference type="GO" id="GO:0007218">
    <property type="term" value="P:neuropeptide signaling pathway"/>
    <property type="evidence" value="ECO:0000314"/>
    <property type="project" value="FlyBase"/>
</dbReference>
<dbReference type="InterPro" id="IPR037729">
    <property type="entry name" value="CCHa1/2"/>
</dbReference>
<dbReference type="PANTHER" id="PTHR35980">
    <property type="entry name" value="NEUROPEPTIDE CCHAMIDE-1-RELATED"/>
    <property type="match status" value="1"/>
</dbReference>
<dbReference type="PANTHER" id="PTHR35980:SF1">
    <property type="entry name" value="NEUROPEPTIDE CCHAMIDE-1-RELATED"/>
    <property type="match status" value="1"/>
</dbReference>
<gene>
    <name evidence="18" type="primary">CCHa1</name>
    <name evidence="18" type="ORF">CG14358</name>
</gene>
<comment type="function">
    <text evidence="3 5 9 10 11 14">Neuropeptide ligand for the CCHamide-1 receptor CCHa1-R (PubMed:21110953, PubMed:23293632). Neuromessenger mediating signaling between neuronal cells of the circadian clock network involved in regulation of sleep latency (the time required to fall asleep), amount of sleep and depth of sleep (arousability) (PubMed:30246807, PubMed:36958331). Together with PDF, involved in regulating intensity and periodicity of daytime activity (PubMed:36786215). In subsets of clock neurons modulates the rhythmic expression of PDP1 and PDF, and together with PDF modulates the rhythmic expression of circadian protein PER/period, but not TIM/timeless (PubMed:30246807, PubMed:36786215). Mediates signaling from DN1a (anterior dorsal neurons 1) clock neurons to s-LNv (small ventral lateral neurons) clock neurons through CCHa1-R, contributing to regulation of activity rhythms by the circadian clock, particularly in the morning (PubMed:30246807). May be involved in signaling between clock neurons and non-clock neurons, such as the fan-shaped body, involved in sleep homeostasis (PubMed:36786215). In response to a high protein diet mediates hormonal signaling between the gut and a CCHa1-R expressing subset of dopaminergic cells in the protocerebral anterior medial (PAM) cluster of the brain (PubMed:36958331). This suppresses arousability by mechano-sensory stimulation (but not thermal stimulation) but is not involved in regulation of sleep patterns (PubMed:36958331).</text>
</comment>
<comment type="subcellular location">
    <subcellularLocation>
        <location evidence="15">Secreted</location>
    </subcellularLocation>
</comment>
<comment type="tissue specificity">
    <text evidence="6 7 9 11">Expressed in endocrine cells of the larval midgut (at protein level) (PubMed:24098432, PubMed:24850274). In the brain, expressed in the optic lobes, lateral protocerebrum, subesophageal ganglion, and intermediate and superior medial protocerebrum (at protein level) (PubMed:30246807). Expressed in DN1a neurons but not in other clock neurons and expression follows a rhythmic pattern controlled by the circadian clock (at protein level) (PubMed:30246807). In the posterior midgut, expressed in enteroendocrine cells (at protein level) (PubMed:36958331). Low levels in larval brain with higher levels in larval and adult gut and adult brain (PubMed:24098432).</text>
</comment>
<comment type="developmental stage">
    <text evidence="6">Very low expression in eggs. Expression increases during larval stages, decreases in pupae and increases again in adults.</text>
</comment>
<comment type="induction">
    <text evidence="9 11">In the brain, rhythmic expression is regulated by the circadian clock (PubMed:30246807). In midgut enteroendocrine cells, induced by a high protein diet (PubMed:36958331).</text>
</comment>
<comment type="mass spectrometry"/>
<comment type="mass spectrometry"/>
<comment type="disruption phenotype">
    <text evidence="8 9 10 11">No effect on developmental timing or on levels of the insulin-like peptides Ilp2 and Ilp3 (PubMed:26168160). Reduced and delayed behavioral activity, particularly in the morning, with significantly longer siesta (PubMed:30246807, PubMed:36786215). This phenotype is not further exacerbated in a PDF(01) background (PubMed:36786215). No significant effect on free-running period or activity rhythm and power in the absence of a light-dark photostimulation cycle, but enhances the reduction in free-running activity power and rhythmicity of PDF(01) mutants (PubMed:30246807, PubMed:36786215). No effect on photic entrainment of circadian rhythms (PubMed:36786215). RNAi-mediated knockdown reduces baseline levels of PDP1 in most clock-neurons, increasing the amplitude of circadian rhythm induced PDP1 level oscillations (PubMed:30246807). The circadian reduction of PDP1 levels in the morning is phase-advanced, possibly contributing to earlier decrease of morning activity (PubMed:30246807). In the absence of a day-night light cycle PDP-1 level oscillations are phase-delayed in s-LNv, 5th s-LNv and LNd cells; oscillations in other clock-neurons require photo-stimulation (PubMed:30246807). RNAi-mediated knockdown enhances sensory responsiveness and arousability during sleep, resulting in fragmented sleep patterns characterized by slight decrease in duration and increase in frequency of sleep bouts, and while awake, resulting in increased locomotion in response to vibration (PubMed:36958331).</text>
</comment>
<accession>Q4V4I9</accession>
<accession>A0A1L1VVC8</accession>
<accession>Q9VFN6</accession>
<sequence>MWYSKCSWTLVVLVALFALVTGSCLEYGHSCWGAHGKRSGGKAVIDAKQHPLPNSYGLDSVVEQLYNNNNNNQNNQDDDNNDDDSNRNTNANSANNIPLAAPAIISRRESEDRRIGGLKWAQLMRQHRYQLRQLQDQQQQGRGRGGQGQYDAAAESWRKLQQALQAQIDADNENYSGYELTK</sequence>
<proteinExistence type="evidence at protein level"/>
<name>CCHA1_DROME</name>
<keyword id="KW-0027">Amidation</keyword>
<keyword id="KW-0903">Direct protein sequencing</keyword>
<keyword id="KW-1015">Disulfide bond</keyword>
<keyword id="KW-0325">Glycoprotein</keyword>
<keyword id="KW-0372">Hormone</keyword>
<keyword id="KW-0527">Neuropeptide</keyword>
<keyword id="KW-1185">Reference proteome</keyword>
<keyword id="KW-0964">Secreted</keyword>
<keyword id="KW-0732">Signal</keyword>
<feature type="signal peptide" evidence="4 5">
    <location>
        <begin position="1"/>
        <end position="22"/>
    </location>
</feature>
<feature type="peptide" id="PRO_0000435025" description="Neuropeptide CCHamide-1" evidence="4 5">
    <location>
        <begin position="23"/>
        <end position="35"/>
    </location>
</feature>
<feature type="propeptide" id="PRO_0000435026" evidence="4 5">
    <location>
        <begin position="39"/>
        <end position="182"/>
    </location>
</feature>
<feature type="region of interest" description="Disordered" evidence="2">
    <location>
        <begin position="67"/>
        <end position="103"/>
    </location>
</feature>
<feature type="region of interest" description="Disordered" evidence="2">
    <location>
        <begin position="133"/>
        <end position="154"/>
    </location>
</feature>
<feature type="compositionally biased region" description="Low complexity" evidence="2">
    <location>
        <begin position="87"/>
        <end position="103"/>
    </location>
</feature>
<feature type="modified residue" description="Histidine amide" evidence="4 5">
    <location>
        <position position="35"/>
    </location>
</feature>
<feature type="glycosylation site" description="N-linked (GlcNAc...) asparagine" evidence="1">
    <location>
        <position position="174"/>
    </location>
</feature>
<feature type="disulfide bond" evidence="4 5">
    <location>
        <begin position="24"/>
        <end position="31"/>
    </location>
</feature>
<feature type="sequence conflict" description="In Ref. 2; AHE76189." evidence="15" ref="2">
    <location>
        <begin position="146"/>
        <end position="147"/>
    </location>
</feature>
<feature type="sequence conflict" description="In Ref. 2; AHE76189." evidence="15" ref="2">
    <original>A</original>
    <variation>G</variation>
    <location>
        <position position="154"/>
    </location>
</feature>